<proteinExistence type="inferred from homology"/>
<geneLocation type="chloroplast"/>
<name>PETG_SOLTU</name>
<protein>
    <recommendedName>
        <fullName evidence="1">Cytochrome b6-f complex subunit 5</fullName>
    </recommendedName>
    <alternativeName>
        <fullName evidence="1">Cytochrome b6-f complex subunit PetG</fullName>
    </alternativeName>
    <alternativeName>
        <fullName evidence="1">Cytochrome b6-f complex subunit V</fullName>
    </alternativeName>
</protein>
<evidence type="ECO:0000255" key="1">
    <source>
        <dbReference type="HAMAP-Rule" id="MF_00432"/>
    </source>
</evidence>
<keyword id="KW-0150">Chloroplast</keyword>
<keyword id="KW-0249">Electron transport</keyword>
<keyword id="KW-0472">Membrane</keyword>
<keyword id="KW-0602">Photosynthesis</keyword>
<keyword id="KW-0934">Plastid</keyword>
<keyword id="KW-1185">Reference proteome</keyword>
<keyword id="KW-0793">Thylakoid</keyword>
<keyword id="KW-0812">Transmembrane</keyword>
<keyword id="KW-1133">Transmembrane helix</keyword>
<keyword id="KW-0813">Transport</keyword>
<gene>
    <name evidence="1" type="primary">petG</name>
</gene>
<accession>Q2VEF9</accession>
<organism>
    <name type="scientific">Solanum tuberosum</name>
    <name type="common">Potato</name>
    <dbReference type="NCBI Taxonomy" id="4113"/>
    <lineage>
        <taxon>Eukaryota</taxon>
        <taxon>Viridiplantae</taxon>
        <taxon>Streptophyta</taxon>
        <taxon>Embryophyta</taxon>
        <taxon>Tracheophyta</taxon>
        <taxon>Spermatophyta</taxon>
        <taxon>Magnoliopsida</taxon>
        <taxon>eudicotyledons</taxon>
        <taxon>Gunneridae</taxon>
        <taxon>Pentapetalae</taxon>
        <taxon>asterids</taxon>
        <taxon>lamiids</taxon>
        <taxon>Solanales</taxon>
        <taxon>Solanaceae</taxon>
        <taxon>Solanoideae</taxon>
        <taxon>Solaneae</taxon>
        <taxon>Solanum</taxon>
    </lineage>
</organism>
<reference key="1">
    <citation type="journal article" date="2006" name="Plant Cell Rep.">
        <title>The complete chloroplast genome sequences of Solanum tuberosum and comparative analysis with Solanaceae species identified the presence of a 241-bp deletion in cultivated potato chloroplast DNA sequence.</title>
        <authorList>
            <person name="Chung H.-J."/>
            <person name="Jung J.D."/>
            <person name="Park H.-W."/>
            <person name="Kim J.-H."/>
            <person name="Cha H.W."/>
            <person name="Min S.R."/>
            <person name="Jeong W.-J."/>
            <person name="Liu J.R."/>
        </authorList>
    </citation>
    <scope>NUCLEOTIDE SEQUENCE [LARGE SCALE GENOMIC DNA]</scope>
    <source>
        <strain>cv. Desiree</strain>
    </source>
</reference>
<reference key="2">
    <citation type="submission" date="2006-02" db="EMBL/GenBank/DDBJ databases">
        <title>Complete chloroplast genome sequences of Solanum tuberosum cultivar Desiree and comparative analyses with other Solanaceae genomes.</title>
        <authorList>
            <person name="Gargano D."/>
            <person name="Scotti N."/>
            <person name="Vezzi A."/>
            <person name="Bilardi A."/>
            <person name="Valle G."/>
            <person name="Grillo S."/>
            <person name="Cardi T."/>
        </authorList>
    </citation>
    <scope>NUCLEOTIDE SEQUENCE [LARGE SCALE GENOMIC DNA]</scope>
    <source>
        <strain>cv. Desiree</strain>
    </source>
</reference>
<feature type="chain" id="PRO_0000275509" description="Cytochrome b6-f complex subunit 5">
    <location>
        <begin position="1"/>
        <end position="37"/>
    </location>
</feature>
<feature type="transmembrane region" description="Helical" evidence="1">
    <location>
        <begin position="5"/>
        <end position="25"/>
    </location>
</feature>
<comment type="function">
    <text evidence="1">Component of the cytochrome b6-f complex, which mediates electron transfer between photosystem II (PSII) and photosystem I (PSI), cyclic electron flow around PSI, and state transitions. PetG is required for either the stability or assembly of the cytochrome b6-f complex.</text>
</comment>
<comment type="subunit">
    <text evidence="1">The 4 large subunits of the cytochrome b6-f complex are cytochrome b6, subunit IV (17 kDa polypeptide, PetD), cytochrome f and the Rieske protein, while the 4 small subunits are PetG, PetL, PetM and PetN. The complex functions as a dimer.</text>
</comment>
<comment type="subcellular location">
    <subcellularLocation>
        <location evidence="1">Plastid</location>
        <location evidence="1">Chloroplast thylakoid membrane</location>
        <topology evidence="1">Single-pass membrane protein</topology>
    </subcellularLocation>
</comment>
<comment type="similarity">
    <text evidence="1">Belongs to the PetG family.</text>
</comment>
<sequence length="37" mass="4170">MIEVFLFGIVLGLIPITLAGLFVTAYLQYRRGDQLDL</sequence>
<dbReference type="EMBL" id="DQ231562">
    <property type="protein sequence ID" value="ABB90059.1"/>
    <property type="molecule type" value="Genomic_DNA"/>
</dbReference>
<dbReference type="EMBL" id="DQ386163">
    <property type="protein sequence ID" value="ABD47076.1"/>
    <property type="molecule type" value="Genomic_DNA"/>
</dbReference>
<dbReference type="RefSeq" id="YP_635658.1">
    <property type="nucleotide sequence ID" value="NC_008096.2"/>
</dbReference>
<dbReference type="SMR" id="Q2VEF9"/>
<dbReference type="FunCoup" id="Q2VEF9">
    <property type="interactions" value="37"/>
</dbReference>
<dbReference type="STRING" id="4113.Q2VEF9"/>
<dbReference type="GeneID" id="4099863"/>
<dbReference type="KEGG" id="sot:4099863"/>
<dbReference type="InParanoid" id="Q2VEF9"/>
<dbReference type="OrthoDB" id="35473at2759"/>
<dbReference type="Proteomes" id="UP000011115">
    <property type="component" value="Unassembled WGS sequence"/>
</dbReference>
<dbReference type="GO" id="GO:0009535">
    <property type="term" value="C:chloroplast thylakoid membrane"/>
    <property type="evidence" value="ECO:0007669"/>
    <property type="project" value="UniProtKB-SubCell"/>
</dbReference>
<dbReference type="GO" id="GO:0009512">
    <property type="term" value="C:cytochrome b6f complex"/>
    <property type="evidence" value="ECO:0007669"/>
    <property type="project" value="InterPro"/>
</dbReference>
<dbReference type="GO" id="GO:0045158">
    <property type="term" value="F:electron transporter, transferring electrons within cytochrome b6/f complex of photosystem II activity"/>
    <property type="evidence" value="ECO:0007669"/>
    <property type="project" value="UniProtKB-UniRule"/>
</dbReference>
<dbReference type="GO" id="GO:0017004">
    <property type="term" value="P:cytochrome complex assembly"/>
    <property type="evidence" value="ECO:0007669"/>
    <property type="project" value="UniProtKB-UniRule"/>
</dbReference>
<dbReference type="GO" id="GO:0015979">
    <property type="term" value="P:photosynthesis"/>
    <property type="evidence" value="ECO:0007669"/>
    <property type="project" value="UniProtKB-KW"/>
</dbReference>
<dbReference type="HAMAP" id="MF_00432">
    <property type="entry name" value="Cytb6_f_PetG"/>
    <property type="match status" value="1"/>
</dbReference>
<dbReference type="InterPro" id="IPR003683">
    <property type="entry name" value="Cyt_6/f_cplx_su5"/>
</dbReference>
<dbReference type="InterPro" id="IPR036099">
    <property type="entry name" value="Cyt_6/f_cplx_su5_sf"/>
</dbReference>
<dbReference type="NCBIfam" id="NF001907">
    <property type="entry name" value="PRK00665.1"/>
    <property type="match status" value="1"/>
</dbReference>
<dbReference type="Pfam" id="PF02529">
    <property type="entry name" value="PetG"/>
    <property type="match status" value="1"/>
</dbReference>
<dbReference type="PIRSF" id="PIRSF000034">
    <property type="entry name" value="Cyt_b6-f_V"/>
    <property type="match status" value="1"/>
</dbReference>
<dbReference type="SUPFAM" id="SSF103446">
    <property type="entry name" value="PetG subunit of the cytochrome b6f complex"/>
    <property type="match status" value="1"/>
</dbReference>